<sequence length="969" mass="109124">MELAKSFDPADIEAFWRTEWEKRGYYTATTDADKPSFSIQLPPPNVTGTLHLGHGFNQTIMDGLTRYHRMRGFNTAWIPGTDHAGIATQIVVERQLDAQKITRHDLGREKFIEKVWEWKEKSGSTITGQMRRLGTSPDWSREYFTMDEPRSKVVTEVFVRLVEQGLIYRGKRLVNWDPVLGTAVSDLEVVSEEEDGHMWNIRYPLADGSTYKFPIAYDEAGNATEWEERNFIVVATTRPETMLGDVAVAVDPDDERYTHLVGKLLTLPLCDRAIPIIADDYVDKEFGTGCVKITPAHDFNDYAVGQRHNLDKISILTLDAKINEHAPAAYQGMDRYAARKQIVADLDAQGLLELVKPHKLMVPRGDRTNAVIEPMLTDQWFVAMSKPAPEGTHFPGKSITEVALEKVASGEVKLLPENWANTYNQWLNNIQDWCISRQLWWGHQIPAWYDSEGKVYVARNEEEARTKAAAQGYHGPLTRDEDVLDTWFSSALVPFSTLGWPEETPDFKNFLPSSVLVTGFDIIFFWVARMVMMTTHFTGKVPFNTVYVHGLIRDSSGQKMSKSKGNTLDPIDLIDGISVEDLVAKRTVGLMNPKQAASIEKATRKEYPNGIAAYGTDALRFTMASYASLGRNINFDLHRCEGYRNFCNKLWNATRFVLMNCEGQDCGFRDAPCAAGDCAVDGKAGGYTDFSQADRWIVSKLQRTETDIAKGFADYRFDNIASSLYQFIWDEYCDWYLEVAKVQIQTGTEAQQRATRRTLLRVLETILRLAHPVIPFITEQLWQTVAPLAGHKMHPAGDSIMMQPYPEAQPGKLDEQAESWMAELKSMTDACRNLRGEMQLSPALRVPLIMEAGDTEQAARLQSFAPYLQALAKLSEVNVADQLPESPAPVSIVGAAKLMLKVEIDVAAERERLSKEIARLDGEITKANSKLGNENFVARAPAQVVAQEEERVANFSATLEKLREQFIKL</sequence>
<proteinExistence type="inferred from homology"/>
<keyword id="KW-0030">Aminoacyl-tRNA synthetase</keyword>
<keyword id="KW-0067">ATP-binding</keyword>
<keyword id="KW-0175">Coiled coil</keyword>
<keyword id="KW-0963">Cytoplasm</keyword>
<keyword id="KW-0436">Ligase</keyword>
<keyword id="KW-0547">Nucleotide-binding</keyword>
<keyword id="KW-0648">Protein biosynthesis</keyword>
<keyword id="KW-1185">Reference proteome</keyword>
<gene>
    <name evidence="1" type="primary">valS</name>
    <name type="ordered locus">HEAR0261</name>
</gene>
<accession>A4G1V2</accession>
<evidence type="ECO:0000255" key="1">
    <source>
        <dbReference type="HAMAP-Rule" id="MF_02004"/>
    </source>
</evidence>
<reference key="1">
    <citation type="journal article" date="2007" name="PLoS Genet.">
        <title>A tale of two oxidation states: bacterial colonization of arsenic-rich environments.</title>
        <authorList>
            <person name="Muller D."/>
            <person name="Medigue C."/>
            <person name="Koechler S."/>
            <person name="Barbe V."/>
            <person name="Barakat M."/>
            <person name="Talla E."/>
            <person name="Bonnefoy V."/>
            <person name="Krin E."/>
            <person name="Arsene-Ploetze F."/>
            <person name="Carapito C."/>
            <person name="Chandler M."/>
            <person name="Cournoyer B."/>
            <person name="Cruveiller S."/>
            <person name="Dossat C."/>
            <person name="Duval S."/>
            <person name="Heymann M."/>
            <person name="Leize E."/>
            <person name="Lieutaud A."/>
            <person name="Lievremont D."/>
            <person name="Makita Y."/>
            <person name="Mangenot S."/>
            <person name="Nitschke W."/>
            <person name="Ortet P."/>
            <person name="Perdrial N."/>
            <person name="Schoepp B."/>
            <person name="Siguier P."/>
            <person name="Simeonova D.D."/>
            <person name="Rouy Z."/>
            <person name="Segurens B."/>
            <person name="Turlin E."/>
            <person name="Vallenet D."/>
            <person name="van Dorsselaer A."/>
            <person name="Weiss S."/>
            <person name="Weissenbach J."/>
            <person name="Lett M.-C."/>
            <person name="Danchin A."/>
            <person name="Bertin P.N."/>
        </authorList>
    </citation>
    <scope>NUCLEOTIDE SEQUENCE [LARGE SCALE GENOMIC DNA]</scope>
    <source>
        <strain>ULPAs1</strain>
    </source>
</reference>
<dbReference type="EC" id="6.1.1.9" evidence="1"/>
<dbReference type="EMBL" id="CU207211">
    <property type="protein sequence ID" value="CAL60489.1"/>
    <property type="molecule type" value="Genomic_DNA"/>
</dbReference>
<dbReference type="SMR" id="A4G1V2"/>
<dbReference type="STRING" id="204773.HEAR0261"/>
<dbReference type="KEGG" id="har:HEAR0261"/>
<dbReference type="eggNOG" id="COG0525">
    <property type="taxonomic scope" value="Bacteria"/>
</dbReference>
<dbReference type="HOGENOM" id="CLU_001493_0_2_4"/>
<dbReference type="OrthoDB" id="9810365at2"/>
<dbReference type="Proteomes" id="UP000006697">
    <property type="component" value="Chromosome"/>
</dbReference>
<dbReference type="GO" id="GO:0005829">
    <property type="term" value="C:cytosol"/>
    <property type="evidence" value="ECO:0007669"/>
    <property type="project" value="TreeGrafter"/>
</dbReference>
<dbReference type="GO" id="GO:0002161">
    <property type="term" value="F:aminoacyl-tRNA deacylase activity"/>
    <property type="evidence" value="ECO:0007669"/>
    <property type="project" value="InterPro"/>
</dbReference>
<dbReference type="GO" id="GO:0005524">
    <property type="term" value="F:ATP binding"/>
    <property type="evidence" value="ECO:0007669"/>
    <property type="project" value="UniProtKB-UniRule"/>
</dbReference>
<dbReference type="GO" id="GO:0004832">
    <property type="term" value="F:valine-tRNA ligase activity"/>
    <property type="evidence" value="ECO:0007669"/>
    <property type="project" value="UniProtKB-UniRule"/>
</dbReference>
<dbReference type="GO" id="GO:0006438">
    <property type="term" value="P:valyl-tRNA aminoacylation"/>
    <property type="evidence" value="ECO:0007669"/>
    <property type="project" value="UniProtKB-UniRule"/>
</dbReference>
<dbReference type="CDD" id="cd07962">
    <property type="entry name" value="Anticodon_Ia_Val"/>
    <property type="match status" value="1"/>
</dbReference>
<dbReference type="CDD" id="cd00817">
    <property type="entry name" value="ValRS_core"/>
    <property type="match status" value="1"/>
</dbReference>
<dbReference type="FunFam" id="1.10.287.380:FF:000001">
    <property type="entry name" value="Valine--tRNA ligase"/>
    <property type="match status" value="1"/>
</dbReference>
<dbReference type="FunFam" id="1.10.730.10:FF:000009">
    <property type="entry name" value="Valine--tRNA ligase, mitochondrial"/>
    <property type="match status" value="1"/>
</dbReference>
<dbReference type="FunFam" id="3.40.50.620:FF:000020">
    <property type="entry name" value="Valine--tRNA ligase, mitochondrial"/>
    <property type="match status" value="1"/>
</dbReference>
<dbReference type="FunFam" id="3.40.50.620:FF:000078">
    <property type="entry name" value="Valine--tRNA ligase, mitochondrial"/>
    <property type="match status" value="1"/>
</dbReference>
<dbReference type="Gene3D" id="3.40.50.620">
    <property type="entry name" value="HUPs"/>
    <property type="match status" value="2"/>
</dbReference>
<dbReference type="Gene3D" id="1.10.730.10">
    <property type="entry name" value="Isoleucyl-tRNA Synthetase, Domain 1"/>
    <property type="match status" value="1"/>
</dbReference>
<dbReference type="Gene3D" id="1.10.287.380">
    <property type="entry name" value="Valyl-tRNA synthetase, C-terminal domain"/>
    <property type="match status" value="1"/>
</dbReference>
<dbReference type="HAMAP" id="MF_02004">
    <property type="entry name" value="Val_tRNA_synth_type1"/>
    <property type="match status" value="1"/>
</dbReference>
<dbReference type="InterPro" id="IPR001412">
    <property type="entry name" value="aa-tRNA-synth_I_CS"/>
</dbReference>
<dbReference type="InterPro" id="IPR002300">
    <property type="entry name" value="aa-tRNA-synth_Ia"/>
</dbReference>
<dbReference type="InterPro" id="IPR033705">
    <property type="entry name" value="Anticodon_Ia_Val"/>
</dbReference>
<dbReference type="InterPro" id="IPR013155">
    <property type="entry name" value="M/V/L/I-tRNA-synth_anticd-bd"/>
</dbReference>
<dbReference type="InterPro" id="IPR014729">
    <property type="entry name" value="Rossmann-like_a/b/a_fold"/>
</dbReference>
<dbReference type="InterPro" id="IPR010978">
    <property type="entry name" value="tRNA-bd_arm"/>
</dbReference>
<dbReference type="InterPro" id="IPR009080">
    <property type="entry name" value="tRNAsynth_Ia_anticodon-bd"/>
</dbReference>
<dbReference type="InterPro" id="IPR037118">
    <property type="entry name" value="Val-tRNA_synth_C_sf"/>
</dbReference>
<dbReference type="InterPro" id="IPR019499">
    <property type="entry name" value="Val-tRNA_synth_tRNA-bd"/>
</dbReference>
<dbReference type="InterPro" id="IPR009008">
    <property type="entry name" value="Val/Leu/Ile-tRNA-synth_edit"/>
</dbReference>
<dbReference type="InterPro" id="IPR002303">
    <property type="entry name" value="Valyl-tRNA_ligase"/>
</dbReference>
<dbReference type="NCBIfam" id="NF004349">
    <property type="entry name" value="PRK05729.1"/>
    <property type="match status" value="1"/>
</dbReference>
<dbReference type="NCBIfam" id="TIGR00422">
    <property type="entry name" value="valS"/>
    <property type="match status" value="1"/>
</dbReference>
<dbReference type="PANTHER" id="PTHR11946:SF93">
    <property type="entry name" value="VALINE--TRNA LIGASE, CHLOROPLASTIC_MITOCHONDRIAL 2"/>
    <property type="match status" value="1"/>
</dbReference>
<dbReference type="PANTHER" id="PTHR11946">
    <property type="entry name" value="VALYL-TRNA SYNTHETASES"/>
    <property type="match status" value="1"/>
</dbReference>
<dbReference type="Pfam" id="PF08264">
    <property type="entry name" value="Anticodon_1"/>
    <property type="match status" value="1"/>
</dbReference>
<dbReference type="Pfam" id="PF00133">
    <property type="entry name" value="tRNA-synt_1"/>
    <property type="match status" value="1"/>
</dbReference>
<dbReference type="Pfam" id="PF10458">
    <property type="entry name" value="Val_tRNA-synt_C"/>
    <property type="match status" value="1"/>
</dbReference>
<dbReference type="PRINTS" id="PR00986">
    <property type="entry name" value="TRNASYNTHVAL"/>
</dbReference>
<dbReference type="SUPFAM" id="SSF47323">
    <property type="entry name" value="Anticodon-binding domain of a subclass of class I aminoacyl-tRNA synthetases"/>
    <property type="match status" value="1"/>
</dbReference>
<dbReference type="SUPFAM" id="SSF52374">
    <property type="entry name" value="Nucleotidylyl transferase"/>
    <property type="match status" value="1"/>
</dbReference>
<dbReference type="SUPFAM" id="SSF46589">
    <property type="entry name" value="tRNA-binding arm"/>
    <property type="match status" value="1"/>
</dbReference>
<dbReference type="SUPFAM" id="SSF50677">
    <property type="entry name" value="ValRS/IleRS/LeuRS editing domain"/>
    <property type="match status" value="1"/>
</dbReference>
<dbReference type="PROSITE" id="PS00178">
    <property type="entry name" value="AA_TRNA_LIGASE_I"/>
    <property type="match status" value="1"/>
</dbReference>
<feature type="chain" id="PRO_1000022166" description="Valine--tRNA ligase">
    <location>
        <begin position="1"/>
        <end position="969"/>
    </location>
</feature>
<feature type="coiled-coil region" evidence="1">
    <location>
        <begin position="812"/>
        <end position="839"/>
    </location>
</feature>
<feature type="coiled-coil region" evidence="1">
    <location>
        <begin position="904"/>
        <end position="969"/>
    </location>
</feature>
<feature type="short sequence motif" description="'HIGH' region">
    <location>
        <begin position="44"/>
        <end position="54"/>
    </location>
</feature>
<feature type="short sequence motif" description="'KMSKS' region">
    <location>
        <begin position="559"/>
        <end position="563"/>
    </location>
</feature>
<feature type="binding site" evidence="1">
    <location>
        <position position="562"/>
    </location>
    <ligand>
        <name>ATP</name>
        <dbReference type="ChEBI" id="CHEBI:30616"/>
    </ligand>
</feature>
<protein>
    <recommendedName>
        <fullName evidence="1">Valine--tRNA ligase</fullName>
        <ecNumber evidence="1">6.1.1.9</ecNumber>
    </recommendedName>
    <alternativeName>
        <fullName evidence="1">Valyl-tRNA synthetase</fullName>
        <shortName evidence="1">ValRS</shortName>
    </alternativeName>
</protein>
<organism>
    <name type="scientific">Herminiimonas arsenicoxydans</name>
    <dbReference type="NCBI Taxonomy" id="204773"/>
    <lineage>
        <taxon>Bacteria</taxon>
        <taxon>Pseudomonadati</taxon>
        <taxon>Pseudomonadota</taxon>
        <taxon>Betaproteobacteria</taxon>
        <taxon>Burkholderiales</taxon>
        <taxon>Oxalobacteraceae</taxon>
        <taxon>Herminiimonas</taxon>
    </lineage>
</organism>
<name>SYV_HERAR</name>
<comment type="function">
    <text evidence="1">Catalyzes the attachment of valine to tRNA(Val). As ValRS can inadvertently accommodate and process structurally similar amino acids such as threonine, to avoid such errors, it has a 'posttransfer' editing activity that hydrolyzes mischarged Thr-tRNA(Val) in a tRNA-dependent manner.</text>
</comment>
<comment type="catalytic activity">
    <reaction evidence="1">
        <text>tRNA(Val) + L-valine + ATP = L-valyl-tRNA(Val) + AMP + diphosphate</text>
        <dbReference type="Rhea" id="RHEA:10704"/>
        <dbReference type="Rhea" id="RHEA-COMP:9672"/>
        <dbReference type="Rhea" id="RHEA-COMP:9708"/>
        <dbReference type="ChEBI" id="CHEBI:30616"/>
        <dbReference type="ChEBI" id="CHEBI:33019"/>
        <dbReference type="ChEBI" id="CHEBI:57762"/>
        <dbReference type="ChEBI" id="CHEBI:78442"/>
        <dbReference type="ChEBI" id="CHEBI:78537"/>
        <dbReference type="ChEBI" id="CHEBI:456215"/>
        <dbReference type="EC" id="6.1.1.9"/>
    </reaction>
</comment>
<comment type="subunit">
    <text evidence="1">Monomer.</text>
</comment>
<comment type="subcellular location">
    <subcellularLocation>
        <location evidence="1">Cytoplasm</location>
    </subcellularLocation>
</comment>
<comment type="domain">
    <text evidence="1">ValRS has two distinct active sites: one for aminoacylation and one for editing. The misactivated threonine is translocated from the active site to the editing site.</text>
</comment>
<comment type="domain">
    <text evidence="1">The C-terminal coiled-coil domain is crucial for aminoacylation activity.</text>
</comment>
<comment type="similarity">
    <text evidence="1">Belongs to the class-I aminoacyl-tRNA synthetase family. ValS type 1 subfamily.</text>
</comment>